<sequence>MASVMSNNNNNNNNNNASYMFTNPLSNTGGGLINEIKDAINEMEQLKVLELKQICKSLDLSITGKKAVLQDRIKQFLRKSCDIGHIDPWRPKAIKILIAKVRINSSLPKYSTLWETLKTGAFKHPVASGQLPVTALQSTALPPYSQQQALAYSFTSPFYKPIVQIPDANKKLKQSAGRGCTKMKFKVSKSNHDLLKSNKSYKLYLFSGFSIPFIYETVGHEAIDFPYPCELVFNGTKLEDNVKGLKKQNGTGNPANLTPYLKVPTEMNHLDLHYLNIDKEYSISCFIVEVFSPEALLGKILKRPKIIKQATTAYIKRTLNEQDDDDIITTSTVLSLQCPISCTRMKYPAKTDQCKHIQCFDALWFLHSQSQVPTWQCPICQHPIKFDQLKISEFVDNIIQNCNEDVEQVEISVDGSWKPIHNSSAVITDTVNQNHSVKNENQGTVKQEQDYDSRNAFDTNLRNGSNHNEPEIISLDSSDDEAFIPASKSFPTHVNPRNDQLRADIFPSESEGSSDYNPNHTSTPKGSPTMDQDNYQDAFQMRSFLNQGATTNINDTPTNNSSINSFVTATNGDSRIFYNRGPSTPLLPAVLQNLTNQTEAQRNPYGPNYNTTAQDRNLLGIEGDLPPIPPVDPNSEAETELPTRTTSAAHLPPYIHVSTSGHGDDGKIRKRRHSNVSIYIPKNPYATLMKRRPQANHAIMNKTLAQTNDFNTSAQDNSEVVDLTSD</sequence>
<gene>
    <name type="primary">NFI1</name>
    <name type="synonym">SIZ2</name>
    <name type="ordered locus">YOR156C</name>
</gene>
<organism>
    <name type="scientific">Saccharomyces cerevisiae (strain ATCC 204508 / S288c)</name>
    <name type="common">Baker's yeast</name>
    <dbReference type="NCBI Taxonomy" id="559292"/>
    <lineage>
        <taxon>Eukaryota</taxon>
        <taxon>Fungi</taxon>
        <taxon>Dikarya</taxon>
        <taxon>Ascomycota</taxon>
        <taxon>Saccharomycotina</taxon>
        <taxon>Saccharomycetes</taxon>
        <taxon>Saccharomycetales</taxon>
        <taxon>Saccharomycetaceae</taxon>
        <taxon>Saccharomyces</taxon>
    </lineage>
</organism>
<proteinExistence type="evidence at protein level"/>
<protein>
    <recommendedName>
        <fullName>E3 SUMO-protein ligase SIZ2</fullName>
        <ecNumber>2.3.2.-</ecNumber>
    </recommendedName>
    <alternativeName>
        <fullName evidence="10">E3 SUMO-protein transferase SIZ2</fullName>
    </alternativeName>
    <alternativeName>
        <fullName>SAP and Miz-finger domain-containing protein 2</fullName>
    </alternativeName>
</protein>
<reference key="1">
    <citation type="submission" date="1995-09" db="EMBL/GenBank/DDBJ databases">
        <title>S. cerevisiae two-hybrid interactor with the C-terminus of Cdc12p.</title>
        <authorList>
            <person name="De Virgilio C."/>
            <person name="Pringle J.R."/>
        </authorList>
    </citation>
    <scope>NUCLEOTIDE SEQUENCE [GENOMIC DNA]</scope>
    <source>
        <strain>ATCC 204508 / S288c</strain>
    </source>
</reference>
<reference key="2">
    <citation type="journal article" date="1997" name="Yeast">
        <title>Analysis of a 35.6 kb region on the right arm of Saccharomyces cerevisiae chromosome XV.</title>
        <authorList>
            <person name="Bordonne R."/>
            <person name="Camasses A."/>
            <person name="Madania A."/>
            <person name="Poch O."/>
            <person name="Tarassov I.A."/>
            <person name="Winsor B."/>
            <person name="Martin R.P."/>
        </authorList>
    </citation>
    <scope>NUCLEOTIDE SEQUENCE [GENOMIC DNA]</scope>
    <source>
        <strain>S288c / FY1678</strain>
    </source>
</reference>
<reference key="3">
    <citation type="journal article" date="1997" name="Nature">
        <title>The nucleotide sequence of Saccharomyces cerevisiae chromosome XV.</title>
        <authorList>
            <person name="Dujon B."/>
            <person name="Albermann K."/>
            <person name="Aldea M."/>
            <person name="Alexandraki D."/>
            <person name="Ansorge W."/>
            <person name="Arino J."/>
            <person name="Benes V."/>
            <person name="Bohn C."/>
            <person name="Bolotin-Fukuhara M."/>
            <person name="Bordonne R."/>
            <person name="Boyer J."/>
            <person name="Camasses A."/>
            <person name="Casamayor A."/>
            <person name="Casas C."/>
            <person name="Cheret G."/>
            <person name="Cziepluch C."/>
            <person name="Daignan-Fornier B."/>
            <person name="Dang V.-D."/>
            <person name="de Haan M."/>
            <person name="Delius H."/>
            <person name="Durand P."/>
            <person name="Fairhead C."/>
            <person name="Feldmann H."/>
            <person name="Gaillon L."/>
            <person name="Galisson F."/>
            <person name="Gamo F.-J."/>
            <person name="Gancedo C."/>
            <person name="Goffeau A."/>
            <person name="Goulding S.E."/>
            <person name="Grivell L.A."/>
            <person name="Habbig B."/>
            <person name="Hand N.J."/>
            <person name="Hani J."/>
            <person name="Hattenhorst U."/>
            <person name="Hebling U."/>
            <person name="Hernando Y."/>
            <person name="Herrero E."/>
            <person name="Heumann K."/>
            <person name="Hiesel R."/>
            <person name="Hilger F."/>
            <person name="Hofmann B."/>
            <person name="Hollenberg C.P."/>
            <person name="Hughes B."/>
            <person name="Jauniaux J.-C."/>
            <person name="Kalogeropoulos A."/>
            <person name="Katsoulou C."/>
            <person name="Kordes E."/>
            <person name="Lafuente M.J."/>
            <person name="Landt O."/>
            <person name="Louis E.J."/>
            <person name="Maarse A.C."/>
            <person name="Madania A."/>
            <person name="Mannhaupt G."/>
            <person name="Marck C."/>
            <person name="Martin R.P."/>
            <person name="Mewes H.-W."/>
            <person name="Michaux G."/>
            <person name="Paces V."/>
            <person name="Parle-McDermott A.G."/>
            <person name="Pearson B.M."/>
            <person name="Perrin A."/>
            <person name="Pettersson B."/>
            <person name="Poch O."/>
            <person name="Pohl T.M."/>
            <person name="Poirey R."/>
            <person name="Portetelle D."/>
            <person name="Pujol A."/>
            <person name="Purnelle B."/>
            <person name="Ramezani Rad M."/>
            <person name="Rechmann S."/>
            <person name="Schwager C."/>
            <person name="Schweizer M."/>
            <person name="Sor F."/>
            <person name="Sterky F."/>
            <person name="Tarassov I.A."/>
            <person name="Teodoru C."/>
            <person name="Tettelin H."/>
            <person name="Thierry A."/>
            <person name="Tobiasch E."/>
            <person name="Tzermia M."/>
            <person name="Uhlen M."/>
            <person name="Unseld M."/>
            <person name="Valens M."/>
            <person name="Vandenbol M."/>
            <person name="Vetter I."/>
            <person name="Vlcek C."/>
            <person name="Voet M."/>
            <person name="Volckaert G."/>
            <person name="Voss H."/>
            <person name="Wambutt R."/>
            <person name="Wedler H."/>
            <person name="Wiemann S."/>
            <person name="Winsor B."/>
            <person name="Wolfe K.H."/>
            <person name="Zollner A."/>
            <person name="Zumstein E."/>
            <person name="Kleine K."/>
        </authorList>
    </citation>
    <scope>NUCLEOTIDE SEQUENCE [LARGE SCALE GENOMIC DNA]</scope>
    <source>
        <strain>ATCC 204508 / S288c</strain>
    </source>
</reference>
<reference key="4">
    <citation type="journal article" date="2014" name="G3 (Bethesda)">
        <title>The reference genome sequence of Saccharomyces cerevisiae: Then and now.</title>
        <authorList>
            <person name="Engel S.R."/>
            <person name="Dietrich F.S."/>
            <person name="Fisk D.G."/>
            <person name="Binkley G."/>
            <person name="Balakrishnan R."/>
            <person name="Costanzo M.C."/>
            <person name="Dwight S.S."/>
            <person name="Hitz B.C."/>
            <person name="Karra K."/>
            <person name="Nash R.S."/>
            <person name="Weng S."/>
            <person name="Wong E.D."/>
            <person name="Lloyd P."/>
            <person name="Skrzypek M.S."/>
            <person name="Miyasato S.R."/>
            <person name="Simison M."/>
            <person name="Cherry J.M."/>
        </authorList>
    </citation>
    <scope>GENOME REANNOTATION</scope>
    <source>
        <strain>ATCC 204508 / S288c</strain>
    </source>
</reference>
<reference key="5">
    <citation type="journal article" date="2001" name="Gene">
        <title>A novel factor required for the SUMO1/Smt3 conjugation of yeast septins.</title>
        <authorList>
            <person name="Takahashi Y."/>
            <person name="Toh-e A."/>
            <person name="Kikuchi Y."/>
        </authorList>
    </citation>
    <scope>SUBCELLULAR LOCATION</scope>
</reference>
<reference key="6">
    <citation type="journal article" date="2001" name="Genetics">
        <title>Saccharomyces cerevisiae SMT4 encodes an evolutionarily conserved protease with a role in chromosome condensation regulation.</title>
        <authorList>
            <person name="Strunnikov A.V."/>
            <person name="Aravind L."/>
            <person name="Koonin E.V."/>
        </authorList>
    </citation>
    <scope>FUNCTION</scope>
</reference>
<reference key="7">
    <citation type="journal article" date="2003" name="J. Biochem.">
        <title>Comparative analysis of yeast PIAS-type SUMO ligases in vivo and in vitro.</title>
        <authorList>
            <person name="Takahashi Y."/>
            <person name="Toh-e A."/>
            <person name="Kikuchi Y."/>
        </authorList>
    </citation>
    <scope>FUNCTION</scope>
</reference>
<reference key="8">
    <citation type="journal article" date="2003" name="Nature">
        <title>Global analysis of protein expression in yeast.</title>
        <authorList>
            <person name="Ghaemmaghami S."/>
            <person name="Huh W.-K."/>
            <person name="Bower K."/>
            <person name="Howson R.W."/>
            <person name="Belle A."/>
            <person name="Dephoure N."/>
            <person name="O'Shea E.K."/>
            <person name="Weissman J.S."/>
        </authorList>
    </citation>
    <scope>LEVEL OF PROTEIN EXPRESSION [LARGE SCALE ANALYSIS]</scope>
</reference>
<reference key="9">
    <citation type="journal article" date="2004" name="J. Biol. Chem.">
        <title>Global analyses of sumoylated proteins in Saccharomyces cerevisiae. Induction of protein sumoylation by cellular stresses.</title>
        <authorList>
            <person name="Zhou W."/>
            <person name="Ryan J.J."/>
            <person name="Zhou H."/>
        </authorList>
    </citation>
    <scope>SUMOYLATION [LARGE SCALE ANALYSIS]</scope>
    <scope>IDENTIFICATION BY MASS SPECTROMETRY</scope>
</reference>
<reference key="10">
    <citation type="journal article" date="2008" name="Mol. Cell. Proteomics">
        <title>A multidimensional chromatography technology for in-depth phosphoproteome analysis.</title>
        <authorList>
            <person name="Albuquerque C.P."/>
            <person name="Smolka M.B."/>
            <person name="Payne S.H."/>
            <person name="Bafna V."/>
            <person name="Eng J."/>
            <person name="Zhou H."/>
        </authorList>
    </citation>
    <scope>IDENTIFICATION BY MASS SPECTROMETRY [LARGE SCALE ANALYSIS]</scope>
</reference>
<comment type="function">
    <text evidence="5 7">May act as an E3 ligase mediating SUMO/Smt3 attachment to septins. May be involved in chromosome maintenance.</text>
</comment>
<comment type="pathway">
    <text>Protein modification; protein sumoylation.</text>
</comment>
<comment type="subunit">
    <text>Interacts with CDC12.</text>
</comment>
<comment type="subcellular location">
    <subcellularLocation>
        <location evidence="6">Nucleus</location>
    </subcellularLocation>
</comment>
<comment type="PTM">
    <text evidence="9">Autosumoylated upon ethanol stress.</text>
</comment>
<comment type="miscellaneous">
    <text evidence="8">Present with 3170 molecules/cell in log phase SD medium.</text>
</comment>
<comment type="similarity">
    <text evidence="10">Belongs to the PIAS family.</text>
</comment>
<dbReference type="EC" id="2.3.2.-"/>
<dbReference type="EMBL" id="U33152">
    <property type="protein sequence ID" value="AAA86121.1"/>
    <property type="molecule type" value="Genomic_DNA"/>
</dbReference>
<dbReference type="EMBL" id="U55020">
    <property type="protein sequence ID" value="AAC49642.1"/>
    <property type="molecule type" value="Genomic_DNA"/>
</dbReference>
<dbReference type="EMBL" id="Z75064">
    <property type="protein sequence ID" value="CAA99362.1"/>
    <property type="molecule type" value="Genomic_DNA"/>
</dbReference>
<dbReference type="EMBL" id="BK006948">
    <property type="protein sequence ID" value="DAA10929.1"/>
    <property type="molecule type" value="Genomic_DNA"/>
</dbReference>
<dbReference type="PIR" id="S67044">
    <property type="entry name" value="S67044"/>
</dbReference>
<dbReference type="RefSeq" id="NP_014799.1">
    <property type="nucleotide sequence ID" value="NM_001183575.1"/>
</dbReference>
<dbReference type="PDB" id="6U75">
    <property type="method" value="X-ray"/>
    <property type="resolution" value="2.63 A"/>
    <property type="chains" value="A/B=154-420"/>
</dbReference>
<dbReference type="PDBsum" id="6U75"/>
<dbReference type="SMR" id="Q12216"/>
<dbReference type="BioGRID" id="34552">
    <property type="interactions" value="239"/>
</dbReference>
<dbReference type="DIP" id="DIP-5775N"/>
<dbReference type="FunCoup" id="Q12216">
    <property type="interactions" value="221"/>
</dbReference>
<dbReference type="IntAct" id="Q12216">
    <property type="interactions" value="14"/>
</dbReference>
<dbReference type="MINT" id="Q12216"/>
<dbReference type="STRING" id="4932.YOR156C"/>
<dbReference type="iPTMnet" id="Q12216"/>
<dbReference type="PaxDb" id="4932-YOR156C"/>
<dbReference type="PeptideAtlas" id="Q12216"/>
<dbReference type="EnsemblFungi" id="YOR156C_mRNA">
    <property type="protein sequence ID" value="YOR156C"/>
    <property type="gene ID" value="YOR156C"/>
</dbReference>
<dbReference type="GeneID" id="854327"/>
<dbReference type="KEGG" id="sce:YOR156C"/>
<dbReference type="AGR" id="SGD:S000005682"/>
<dbReference type="SGD" id="S000005682">
    <property type="gene designation" value="NFI1"/>
</dbReference>
<dbReference type="VEuPathDB" id="FungiDB:YOR156C"/>
<dbReference type="eggNOG" id="KOG2169">
    <property type="taxonomic scope" value="Eukaryota"/>
</dbReference>
<dbReference type="GeneTree" id="ENSGT01030000234539"/>
<dbReference type="HOGENOM" id="CLU_014307_0_0_1"/>
<dbReference type="InParanoid" id="Q12216"/>
<dbReference type="OMA" id="IEPNGDW"/>
<dbReference type="OrthoDB" id="28127at2759"/>
<dbReference type="BioCyc" id="YEAST:G3O-33673-MONOMER"/>
<dbReference type="Reactome" id="R-SCE-3232118">
    <property type="pathway name" value="SUMOylation of transcription factors"/>
</dbReference>
<dbReference type="Reactome" id="R-SCE-4085377">
    <property type="pathway name" value="SUMOylation of SUMOylation proteins"/>
</dbReference>
<dbReference type="Reactome" id="R-SCE-5693565">
    <property type="pathway name" value="Recruitment and ATM-mediated phosphorylation of repair and signaling proteins at DNA double strand breaks"/>
</dbReference>
<dbReference type="UniPathway" id="UPA00886"/>
<dbReference type="BioGRID-ORCS" id="854327">
    <property type="hits" value="0 hits in 10 CRISPR screens"/>
</dbReference>
<dbReference type="PRO" id="PR:Q12216"/>
<dbReference type="Proteomes" id="UP000002311">
    <property type="component" value="Chromosome XV"/>
</dbReference>
<dbReference type="RNAct" id="Q12216">
    <property type="molecule type" value="protein"/>
</dbReference>
<dbReference type="GO" id="GO:0000785">
    <property type="term" value="C:chromatin"/>
    <property type="evidence" value="ECO:0000314"/>
    <property type="project" value="SGD"/>
</dbReference>
<dbReference type="GO" id="GO:0005737">
    <property type="term" value="C:cytoplasm"/>
    <property type="evidence" value="ECO:0007005"/>
    <property type="project" value="SGD"/>
</dbReference>
<dbReference type="GO" id="GO:0005634">
    <property type="term" value="C:nucleus"/>
    <property type="evidence" value="ECO:0007005"/>
    <property type="project" value="SGD"/>
</dbReference>
<dbReference type="GO" id="GO:0003690">
    <property type="term" value="F:double-stranded DNA binding"/>
    <property type="evidence" value="ECO:0000314"/>
    <property type="project" value="SGD"/>
</dbReference>
<dbReference type="GO" id="GO:0061665">
    <property type="term" value="F:SUMO ligase activity"/>
    <property type="evidence" value="ECO:0000318"/>
    <property type="project" value="GO_Central"/>
</dbReference>
<dbReference type="GO" id="GO:0019789">
    <property type="term" value="F:SUMO transferase activity"/>
    <property type="evidence" value="ECO:0000314"/>
    <property type="project" value="SGD"/>
</dbReference>
<dbReference type="GO" id="GO:0008270">
    <property type="term" value="F:zinc ion binding"/>
    <property type="evidence" value="ECO:0007669"/>
    <property type="project" value="UniProtKB-KW"/>
</dbReference>
<dbReference type="GO" id="GO:0007059">
    <property type="term" value="P:chromosome segregation"/>
    <property type="evidence" value="ECO:0000315"/>
    <property type="project" value="SGD"/>
</dbReference>
<dbReference type="GO" id="GO:1990683">
    <property type="term" value="P:DNA double-strand break attachment to nuclear envelope"/>
    <property type="evidence" value="ECO:0000316"/>
    <property type="project" value="SGD"/>
</dbReference>
<dbReference type="GO" id="GO:0016925">
    <property type="term" value="P:protein sumoylation"/>
    <property type="evidence" value="ECO:0000314"/>
    <property type="project" value="SGD"/>
</dbReference>
<dbReference type="CDD" id="cd16793">
    <property type="entry name" value="SP-RING_ScSiz-like"/>
    <property type="match status" value="1"/>
</dbReference>
<dbReference type="FunFam" id="3.30.40.10:FF:000247">
    <property type="entry name" value="Uncharacterized protein, isoform B"/>
    <property type="match status" value="1"/>
</dbReference>
<dbReference type="Gene3D" id="2.60.120.780">
    <property type="entry name" value="PINIT domain"/>
    <property type="match status" value="1"/>
</dbReference>
<dbReference type="Gene3D" id="1.10.720.30">
    <property type="entry name" value="SAP domain"/>
    <property type="match status" value="1"/>
</dbReference>
<dbReference type="Gene3D" id="3.30.40.10">
    <property type="entry name" value="Zinc/RING finger domain, C3HC4 (zinc finger)"/>
    <property type="match status" value="1"/>
</dbReference>
<dbReference type="InterPro" id="IPR023321">
    <property type="entry name" value="PINIT"/>
</dbReference>
<dbReference type="InterPro" id="IPR038654">
    <property type="entry name" value="PINIT_sf"/>
</dbReference>
<dbReference type="InterPro" id="IPR003034">
    <property type="entry name" value="SAP_dom"/>
</dbReference>
<dbReference type="InterPro" id="IPR036361">
    <property type="entry name" value="SAP_dom_sf"/>
</dbReference>
<dbReference type="InterPro" id="IPR031141">
    <property type="entry name" value="SIZ1/2_SP-RING"/>
</dbReference>
<dbReference type="InterPro" id="IPR004181">
    <property type="entry name" value="Znf_MIZ"/>
</dbReference>
<dbReference type="InterPro" id="IPR013083">
    <property type="entry name" value="Znf_RING/FYVE/PHD"/>
</dbReference>
<dbReference type="PANTHER" id="PTHR10782:SF4">
    <property type="entry name" value="TONALLI, ISOFORM E"/>
    <property type="match status" value="1"/>
</dbReference>
<dbReference type="PANTHER" id="PTHR10782">
    <property type="entry name" value="ZINC FINGER MIZ DOMAIN-CONTAINING PROTEIN"/>
    <property type="match status" value="1"/>
</dbReference>
<dbReference type="Pfam" id="PF14324">
    <property type="entry name" value="PINIT"/>
    <property type="match status" value="1"/>
</dbReference>
<dbReference type="Pfam" id="PF02037">
    <property type="entry name" value="SAP"/>
    <property type="match status" value="1"/>
</dbReference>
<dbReference type="Pfam" id="PF02891">
    <property type="entry name" value="zf-MIZ"/>
    <property type="match status" value="1"/>
</dbReference>
<dbReference type="SMART" id="SM00513">
    <property type="entry name" value="SAP"/>
    <property type="match status" value="1"/>
</dbReference>
<dbReference type="SUPFAM" id="SSF57850">
    <property type="entry name" value="RING/U-box"/>
    <property type="match status" value="1"/>
</dbReference>
<dbReference type="SUPFAM" id="SSF68906">
    <property type="entry name" value="SAP domain"/>
    <property type="match status" value="1"/>
</dbReference>
<dbReference type="PROSITE" id="PS51466">
    <property type="entry name" value="PINIT"/>
    <property type="match status" value="1"/>
</dbReference>
<dbReference type="PROSITE" id="PS50800">
    <property type="entry name" value="SAP"/>
    <property type="match status" value="1"/>
</dbReference>
<dbReference type="PROSITE" id="PS51044">
    <property type="entry name" value="ZF_SP_RING"/>
    <property type="match status" value="1"/>
</dbReference>
<name>SIZ2_YEAST</name>
<keyword id="KW-0002">3D-structure</keyword>
<keyword id="KW-0479">Metal-binding</keyword>
<keyword id="KW-0539">Nucleus</keyword>
<keyword id="KW-1185">Reference proteome</keyword>
<keyword id="KW-0808">Transferase</keyword>
<keyword id="KW-0832">Ubl conjugation</keyword>
<keyword id="KW-0833">Ubl conjugation pathway</keyword>
<keyword id="KW-0862">Zinc</keyword>
<keyword id="KW-0863">Zinc-finger</keyword>
<evidence type="ECO:0000255" key="1">
    <source>
        <dbReference type="PROSITE-ProRule" id="PRU00186"/>
    </source>
</evidence>
<evidence type="ECO:0000255" key="2">
    <source>
        <dbReference type="PROSITE-ProRule" id="PRU00452"/>
    </source>
</evidence>
<evidence type="ECO:0000255" key="3">
    <source>
        <dbReference type="PROSITE-ProRule" id="PRU00799"/>
    </source>
</evidence>
<evidence type="ECO:0000256" key="4">
    <source>
        <dbReference type="SAM" id="MobiDB-lite"/>
    </source>
</evidence>
<evidence type="ECO:0000269" key="5">
    <source>
    </source>
</evidence>
<evidence type="ECO:0000269" key="6">
    <source>
    </source>
</evidence>
<evidence type="ECO:0000269" key="7">
    <source>
    </source>
</evidence>
<evidence type="ECO:0000269" key="8">
    <source>
    </source>
</evidence>
<evidence type="ECO:0000269" key="9">
    <source>
    </source>
</evidence>
<evidence type="ECO:0000305" key="10"/>
<evidence type="ECO:0007829" key="11">
    <source>
        <dbReference type="PDB" id="6U75"/>
    </source>
</evidence>
<accession>Q12216</accession>
<accession>D6W2L3</accession>
<feature type="chain" id="PRO_0000218985" description="E3 SUMO-protein ligase SIZ2">
    <location>
        <begin position="1"/>
        <end position="726"/>
    </location>
</feature>
<feature type="domain" description="SAP" evidence="1">
    <location>
        <begin position="43"/>
        <end position="77"/>
    </location>
</feature>
<feature type="domain" description="PINIT" evidence="3">
    <location>
        <begin position="139"/>
        <end position="291"/>
    </location>
</feature>
<feature type="zinc finger region" description="SP-RING-type" evidence="2">
    <location>
        <begin position="323"/>
        <end position="408"/>
    </location>
</feature>
<feature type="region of interest" description="Disordered" evidence="4">
    <location>
        <begin position="507"/>
        <end position="533"/>
    </location>
</feature>
<feature type="compositionally biased region" description="Polar residues" evidence="4">
    <location>
        <begin position="510"/>
        <end position="533"/>
    </location>
</feature>
<feature type="binding site" evidence="2">
    <location>
        <position position="354"/>
    </location>
    <ligand>
        <name>Zn(2+)</name>
        <dbReference type="ChEBI" id="CHEBI:29105"/>
    </ligand>
</feature>
<feature type="binding site" evidence="2">
    <location>
        <position position="356"/>
    </location>
    <ligand>
        <name>Zn(2+)</name>
        <dbReference type="ChEBI" id="CHEBI:29105"/>
    </ligand>
</feature>
<feature type="binding site" evidence="2">
    <location>
        <position position="377"/>
    </location>
    <ligand>
        <name>Zn(2+)</name>
        <dbReference type="ChEBI" id="CHEBI:29105"/>
    </ligand>
</feature>
<feature type="binding site" evidence="2">
    <location>
        <position position="380"/>
    </location>
    <ligand>
        <name>Zn(2+)</name>
        <dbReference type="ChEBI" id="CHEBI:29105"/>
    </ligand>
</feature>
<feature type="strand" evidence="11">
    <location>
        <begin position="157"/>
        <end position="164"/>
    </location>
</feature>
<feature type="strand" evidence="11">
    <location>
        <begin position="170"/>
        <end position="172"/>
    </location>
</feature>
<feature type="strand" evidence="11">
    <location>
        <begin position="175"/>
        <end position="177"/>
    </location>
</feature>
<feature type="strand" evidence="11">
    <location>
        <begin position="179"/>
        <end position="185"/>
    </location>
</feature>
<feature type="helix" evidence="11">
    <location>
        <begin position="189"/>
        <end position="197"/>
    </location>
</feature>
<feature type="strand" evidence="11">
    <location>
        <begin position="201"/>
        <end position="209"/>
    </location>
</feature>
<feature type="strand" evidence="11">
    <location>
        <begin position="230"/>
        <end position="233"/>
    </location>
</feature>
<feature type="helix" evidence="11">
    <location>
        <begin position="258"/>
        <end position="260"/>
    </location>
</feature>
<feature type="strand" evidence="11">
    <location>
        <begin position="268"/>
        <end position="275"/>
    </location>
</feature>
<feature type="strand" evidence="11">
    <location>
        <begin position="277"/>
        <end position="279"/>
    </location>
</feature>
<feature type="strand" evidence="11">
    <location>
        <begin position="281"/>
        <end position="290"/>
    </location>
</feature>
<feature type="helix" evidence="11">
    <location>
        <begin position="293"/>
        <end position="301"/>
    </location>
</feature>
<feature type="helix" evidence="11">
    <location>
        <begin position="308"/>
        <end position="319"/>
    </location>
</feature>
<feature type="strand" evidence="11">
    <location>
        <begin position="332"/>
        <end position="335"/>
    </location>
</feature>
<feature type="turn" evidence="11">
    <location>
        <begin position="339"/>
        <end position="341"/>
    </location>
</feature>
<feature type="strand" evidence="11">
    <location>
        <begin position="346"/>
        <end position="350"/>
    </location>
</feature>
<feature type="helix" evidence="11">
    <location>
        <begin position="362"/>
        <end position="369"/>
    </location>
</feature>
<feature type="turn" evidence="11">
    <location>
        <begin position="378"/>
        <end position="380"/>
    </location>
</feature>
<feature type="helix" evidence="11">
    <location>
        <begin position="386"/>
        <end position="388"/>
    </location>
</feature>
<feature type="strand" evidence="11">
    <location>
        <begin position="390"/>
        <end position="392"/>
    </location>
</feature>
<feature type="helix" evidence="11">
    <location>
        <begin position="393"/>
        <end position="400"/>
    </location>
</feature>
<feature type="strand" evidence="11">
    <location>
        <begin position="408"/>
        <end position="411"/>
    </location>
</feature>
<feature type="strand" evidence="11">
    <location>
        <begin position="417"/>
        <end position="419"/>
    </location>
</feature>